<proteinExistence type="evidence at transcript level"/>
<reference key="1">
    <citation type="journal article" date="2004" name="Nature">
        <title>Genome evolution in yeasts.</title>
        <authorList>
            <person name="Dujon B."/>
            <person name="Sherman D."/>
            <person name="Fischer G."/>
            <person name="Durrens P."/>
            <person name="Casaregola S."/>
            <person name="Lafontaine I."/>
            <person name="de Montigny J."/>
            <person name="Marck C."/>
            <person name="Neuveglise C."/>
            <person name="Talla E."/>
            <person name="Goffard N."/>
            <person name="Frangeul L."/>
            <person name="Aigle M."/>
            <person name="Anthouard V."/>
            <person name="Babour A."/>
            <person name="Barbe V."/>
            <person name="Barnay S."/>
            <person name="Blanchin S."/>
            <person name="Beckerich J.-M."/>
            <person name="Beyne E."/>
            <person name="Bleykasten C."/>
            <person name="Boisrame A."/>
            <person name="Boyer J."/>
            <person name="Cattolico L."/>
            <person name="Confanioleri F."/>
            <person name="de Daruvar A."/>
            <person name="Despons L."/>
            <person name="Fabre E."/>
            <person name="Fairhead C."/>
            <person name="Ferry-Dumazet H."/>
            <person name="Groppi A."/>
            <person name="Hantraye F."/>
            <person name="Hennequin C."/>
            <person name="Jauniaux N."/>
            <person name="Joyet P."/>
            <person name="Kachouri R."/>
            <person name="Kerrest A."/>
            <person name="Koszul R."/>
            <person name="Lemaire M."/>
            <person name="Lesur I."/>
            <person name="Ma L."/>
            <person name="Muller H."/>
            <person name="Nicaud J.-M."/>
            <person name="Nikolski M."/>
            <person name="Oztas S."/>
            <person name="Ozier-Kalogeropoulos O."/>
            <person name="Pellenz S."/>
            <person name="Potier S."/>
            <person name="Richard G.-F."/>
            <person name="Straub M.-L."/>
            <person name="Suleau A."/>
            <person name="Swennen D."/>
            <person name="Tekaia F."/>
            <person name="Wesolowski-Louvel M."/>
            <person name="Westhof E."/>
            <person name="Wirth B."/>
            <person name="Zeniou-Meyer M."/>
            <person name="Zivanovic Y."/>
            <person name="Bolotin-Fukuhara M."/>
            <person name="Thierry A."/>
            <person name="Bouchier C."/>
            <person name="Caudron B."/>
            <person name="Scarpelli C."/>
            <person name="Gaillardin C."/>
            <person name="Weissenbach J."/>
            <person name="Wincker P."/>
            <person name="Souciet J.-L."/>
        </authorList>
    </citation>
    <scope>NUCLEOTIDE SEQUENCE [LARGE SCALE GENOMIC DNA]</scope>
    <source>
        <strain>ATCC 2001 / BCRC 20586 / JCM 3761 / NBRC 0622 / NRRL Y-65 / CBS 138</strain>
    </source>
</reference>
<reference key="2">
    <citation type="journal article" date="2007" name="Gene">
        <title>The bZip transcription factor Cgap1p is involved in multidrug resistance and required for activation of multidrug transporter gene CgFLR1 in Candida glabrata.</title>
        <authorList>
            <person name="Chen K.H."/>
            <person name="Miyazaki T."/>
            <person name="Tsai H.F."/>
            <person name="Bennett J.E."/>
        </authorList>
    </citation>
    <scope>DISRUPTION PHENOTYPE</scope>
    <scope>FUNCTION</scope>
    <scope>INDUCTION</scope>
</reference>
<reference key="3">
    <citation type="journal article" date="2016" name="Front. Microbiol.">
        <title>Membrane Proteomics analysis of the Candida glabrata response to 5-flucytosine: unveiling the role and regulation of the drug efflux transporters CgFlr1 and CgFlr2.</title>
        <authorList>
            <person name="Pais P."/>
            <person name="Pires C."/>
            <person name="Costa C."/>
            <person name="Okamoto M."/>
            <person name="Chibana H."/>
            <person name="Teixeira M.C."/>
        </authorList>
    </citation>
    <scope>DISRUPTION PHENOTYPE</scope>
    <scope>FUNCTION</scope>
    <scope>INDUCTION</scope>
    <scope>SUBCELLULAR LOCATION</scope>
</reference>
<sequence>MNYLHNFKDTLFVDLLEVLNIVTIGEEHVNQLNLSGDASLSASSESSNMSFNSGSEENSQEKSVEDLEKQNCEINIHKNSDKEADTKKDPFLVTFNGEDDPLMPYNWSTNKKALIIIQTMLLTCVNYMGSSIYTPGQLEIQNEFHVGHVVGTLNLSLYVLGYGLGPIVFSPLTEISSIGRLPVYMITFFLFTMLQIGCALAPNFAGLVILRFITGVLCSPALSTGGATLGDIVSQNYLALVLGLWSIGAVAAPVLAPLLGASMVVAKDWRWIFWLLFFCCCATMLLLTFFFPETSSDTVLHRKAARIRKLTGDNRYYTEKEREEAQLPKKQFLIETLYRPFSMMITEPIVLAFDLYIALCYGAFYLFFEAFPIVFGGIYHFTLVEQGLAYFGFCVGCIFAYIILLVFSIKVAAKRFANNTFTPETTLILAMCIGWCIPLALFMFGWTAKVHWILPIISEVFFVLGCFNIFQASFSYLAICYPKYVASVFAGNGFARSSFAAAFPLFGQAMYNNLGTKNYPVAWGSSLVGFFTIGLWVIPFVLYKYGPSLRSMSKYNR</sequence>
<gene>
    <name evidence="6" type="primary">FLR1</name>
    <name type="ordered locus">CAGL0H06017g</name>
</gene>
<keyword id="KW-1003">Cell membrane</keyword>
<keyword id="KW-0325">Glycoprotein</keyword>
<keyword id="KW-0472">Membrane</keyword>
<keyword id="KW-1185">Reference proteome</keyword>
<keyword id="KW-0812">Transmembrane</keyword>
<keyword id="KW-1133">Transmembrane helix</keyword>
<dbReference type="EMBL" id="CR380954">
    <property type="protein sequence ID" value="CAG59991.1"/>
    <property type="molecule type" value="Genomic_DNA"/>
</dbReference>
<dbReference type="RefSeq" id="XP_447058.1">
    <property type="nucleotide sequence ID" value="XM_447058.1"/>
</dbReference>
<dbReference type="FunCoup" id="Q6FRT6">
    <property type="interactions" value="20"/>
</dbReference>
<dbReference type="STRING" id="284593.Q6FRT6"/>
<dbReference type="GlyCosmos" id="Q6FRT6">
    <property type="glycosylation" value="4 sites, No reported glycans"/>
</dbReference>
<dbReference type="EnsemblFungi" id="CAGL0H06017g-T">
    <property type="protein sequence ID" value="CAGL0H06017g-T-p1"/>
    <property type="gene ID" value="CAGL0H06017g"/>
</dbReference>
<dbReference type="GeneID" id="2888640"/>
<dbReference type="KEGG" id="cgr:2888640"/>
<dbReference type="CGD" id="CAL0131618">
    <property type="gene designation" value="FLR1"/>
</dbReference>
<dbReference type="VEuPathDB" id="FungiDB:CAGL0H06017g"/>
<dbReference type="eggNOG" id="KOG0255">
    <property type="taxonomic scope" value="Eukaryota"/>
</dbReference>
<dbReference type="HOGENOM" id="CLU_008455_11_1_1"/>
<dbReference type="InParanoid" id="Q6FRT6"/>
<dbReference type="OMA" id="WFESFAI"/>
<dbReference type="Proteomes" id="UP000002428">
    <property type="component" value="Chromosome H"/>
</dbReference>
<dbReference type="GO" id="GO:0005886">
    <property type="term" value="C:plasma membrane"/>
    <property type="evidence" value="ECO:0000314"/>
    <property type="project" value="CGD"/>
</dbReference>
<dbReference type="GO" id="GO:0015244">
    <property type="term" value="F:fluconazole transmembrane transporter activity"/>
    <property type="evidence" value="ECO:0007669"/>
    <property type="project" value="TreeGrafter"/>
</dbReference>
<dbReference type="GO" id="GO:0042910">
    <property type="term" value="F:xenobiotic transmembrane transporter activity"/>
    <property type="evidence" value="ECO:0000247"/>
    <property type="project" value="CGD"/>
</dbReference>
<dbReference type="GO" id="GO:1990961">
    <property type="term" value="P:xenobiotic detoxification by transmembrane export across the plasma membrane"/>
    <property type="evidence" value="ECO:0000315"/>
    <property type="project" value="CGD"/>
</dbReference>
<dbReference type="CDD" id="cd17323">
    <property type="entry name" value="MFS_Tpo1_MDR_like"/>
    <property type="match status" value="1"/>
</dbReference>
<dbReference type="FunFam" id="1.20.1250.20:FF:000011">
    <property type="entry name" value="MFS multidrug transporter, putative"/>
    <property type="match status" value="1"/>
</dbReference>
<dbReference type="Gene3D" id="1.20.1250.20">
    <property type="entry name" value="MFS general substrate transporter like domains"/>
    <property type="match status" value="1"/>
</dbReference>
<dbReference type="InterPro" id="IPR011701">
    <property type="entry name" value="MFS"/>
</dbReference>
<dbReference type="InterPro" id="IPR020846">
    <property type="entry name" value="MFS_dom"/>
</dbReference>
<dbReference type="InterPro" id="IPR036259">
    <property type="entry name" value="MFS_trans_sf"/>
</dbReference>
<dbReference type="InterPro" id="IPR004734">
    <property type="entry name" value="Multidrug-R"/>
</dbReference>
<dbReference type="NCBIfam" id="TIGR00880">
    <property type="entry name" value="2_A_01_02"/>
    <property type="match status" value="1"/>
</dbReference>
<dbReference type="PANTHER" id="PTHR23502:SF23">
    <property type="entry name" value="FLUCONAZOLE RESISTANCE PROTEIN 1"/>
    <property type="match status" value="1"/>
</dbReference>
<dbReference type="PANTHER" id="PTHR23502">
    <property type="entry name" value="MAJOR FACILITATOR SUPERFAMILY"/>
    <property type="match status" value="1"/>
</dbReference>
<dbReference type="Pfam" id="PF07690">
    <property type="entry name" value="MFS_1"/>
    <property type="match status" value="1"/>
</dbReference>
<dbReference type="SUPFAM" id="SSF103473">
    <property type="entry name" value="MFS general substrate transporter"/>
    <property type="match status" value="1"/>
</dbReference>
<dbReference type="PROSITE" id="PS50850">
    <property type="entry name" value="MFS"/>
    <property type="match status" value="1"/>
</dbReference>
<feature type="chain" id="PRO_0000443411" description="Multidrug transporter FLR1">
    <location>
        <begin position="1"/>
        <end position="557"/>
    </location>
</feature>
<feature type="transmembrane region" description="Helical" evidence="1">
    <location>
        <begin position="113"/>
        <end position="133"/>
    </location>
</feature>
<feature type="transmembrane region" description="Helical" evidence="1">
    <location>
        <begin position="149"/>
        <end position="169"/>
    </location>
</feature>
<feature type="transmembrane region" description="Helical" evidence="1">
    <location>
        <begin position="181"/>
        <end position="201"/>
    </location>
</feature>
<feature type="transmembrane region" description="Helical" evidence="1">
    <location>
        <begin position="204"/>
        <end position="224"/>
    </location>
</feature>
<feature type="transmembrane region" description="Helical" evidence="1">
    <location>
        <begin position="238"/>
        <end position="258"/>
    </location>
</feature>
<feature type="transmembrane region" description="Helical" evidence="1">
    <location>
        <begin position="271"/>
        <end position="291"/>
    </location>
</feature>
<feature type="transmembrane region" description="Helical" evidence="1">
    <location>
        <begin position="355"/>
        <end position="375"/>
    </location>
</feature>
<feature type="transmembrane region" description="Helical" evidence="1">
    <location>
        <begin position="387"/>
        <end position="407"/>
    </location>
</feature>
<feature type="transmembrane region" description="Helical" evidence="1">
    <location>
        <begin position="426"/>
        <end position="446"/>
    </location>
</feature>
<feature type="transmembrane region" description="Helical" evidence="1">
    <location>
        <begin position="450"/>
        <end position="470"/>
    </location>
</feature>
<feature type="transmembrane region" description="Helical" evidence="1">
    <location>
        <begin position="484"/>
        <end position="506"/>
    </location>
</feature>
<feature type="transmembrane region" description="Helical" evidence="1">
    <location>
        <begin position="521"/>
        <end position="541"/>
    </location>
</feature>
<feature type="region of interest" description="Disordered" evidence="3">
    <location>
        <begin position="44"/>
        <end position="67"/>
    </location>
</feature>
<feature type="compositionally biased region" description="Low complexity" evidence="3">
    <location>
        <begin position="44"/>
        <end position="57"/>
    </location>
</feature>
<feature type="glycosylation site" description="N-linked (GlcNAc...) asparagine" evidence="2">
    <location>
        <position position="33"/>
    </location>
</feature>
<feature type="glycosylation site" description="N-linked (GlcNAc...) asparagine" evidence="2">
    <location>
        <position position="48"/>
    </location>
</feature>
<feature type="glycosylation site" description="N-linked (GlcNAc...) asparagine" evidence="2">
    <location>
        <position position="106"/>
    </location>
</feature>
<feature type="glycosylation site" description="N-linked (GlcNAc...) asparagine" evidence="2">
    <location>
        <position position="418"/>
    </location>
</feature>
<evidence type="ECO:0000255" key="1"/>
<evidence type="ECO:0000255" key="2">
    <source>
        <dbReference type="PROSITE-ProRule" id="PRU00498"/>
    </source>
</evidence>
<evidence type="ECO:0000256" key="3">
    <source>
        <dbReference type="SAM" id="MobiDB-lite"/>
    </source>
</evidence>
<evidence type="ECO:0000269" key="4">
    <source>
    </source>
</evidence>
<evidence type="ECO:0000269" key="5">
    <source>
    </source>
</evidence>
<evidence type="ECO:0000303" key="6">
    <source>
    </source>
</evidence>
<evidence type="ECO:0000303" key="7">
    <source>
    </source>
</evidence>
<evidence type="ECO:0000305" key="8"/>
<accession>Q6FRT6</accession>
<name>FLR1_CANGA</name>
<protein>
    <recommendedName>
        <fullName evidence="6">Multidrug transporter FLR1</fullName>
    </recommendedName>
    <alternativeName>
        <fullName evidence="7">Drug:H(+) antiporter FLR1</fullName>
        <shortName evidence="7">DHA FLR1</shortName>
    </alternativeName>
    <alternativeName>
        <fullName evidence="7">Flucytosine exporter FLR1</fullName>
    </alternativeName>
</protein>
<comment type="function">
    <text evidence="4 5">Multidrug transporter that confers resistance to 5-flucytosine (5-FC) and clotrimazole (PubMed:28066366). Also confers resistance to benomyl, but not 4-nitroquinoline-N-oxide, cycloheximide, or fluconazole (PubMed:17046176). Plays direct roles in extrusion of 5-flucytosine and clotrimazole (PubMed:28066366).</text>
</comment>
<comment type="subcellular location">
    <subcellularLocation>
        <location evidence="5">Cell membrane</location>
        <topology evidence="1">Multi-pass membrane protein</topology>
    </subcellularLocation>
</comment>
<comment type="induction">
    <text evidence="4 5">Expression is induced by benomyl via positive regulation by the transcription factors AP1 and PDR1 (PubMed:17046176, PubMed:28066366). The promoter contains the YAP1 response element (YRE) 5'-TTAC/GTAA-3' which is recognized by AP1 (PubMed:17046176).</text>
</comment>
<comment type="disruption phenotype">
    <text evidence="4 5">Leads to increased sensitivity to benomyl, diamide, and menadione, but not 4-nitroquinoline-N-oxide, cycloheximide, or fluconazole (PubMed:17046176). Increases the intracellular accumulation of 5-flucytosine and clotrimazole (PubMed:28066366).</text>
</comment>
<comment type="similarity">
    <text evidence="8">Belongs to the major facilitator superfamily.</text>
</comment>
<organism>
    <name type="scientific">Candida glabrata (strain ATCC 2001 / BCRC 20586 / JCM 3761 / NBRC 0622 / NRRL Y-65 / CBS 138)</name>
    <name type="common">Yeast</name>
    <name type="synonym">Nakaseomyces glabratus</name>
    <dbReference type="NCBI Taxonomy" id="284593"/>
    <lineage>
        <taxon>Eukaryota</taxon>
        <taxon>Fungi</taxon>
        <taxon>Dikarya</taxon>
        <taxon>Ascomycota</taxon>
        <taxon>Saccharomycotina</taxon>
        <taxon>Saccharomycetes</taxon>
        <taxon>Saccharomycetales</taxon>
        <taxon>Saccharomycetaceae</taxon>
        <taxon>Nakaseomyces</taxon>
    </lineage>
</organism>